<sequence length="447" mass="49407">MLHRYLPMTEEDKKEMLQTIGVQTIDELFSDIPESVRFKGDLKIKEAKSEPELLKELSQMASKNANLKEYASFLGAGVYDHYAPVIVDHVISRSEFYTAYTPYQPEISQGELQAIFEFQTMICELTGMDVANSSMYDGGTALAEAAMLAAGHTRKKKILVSSAVHPESRAVLETYAKGQHLEVVEINHKDGVTDLDVLQSEVDDTVACVIVQYPNFFGQVEKLADIEKIVHQQKSLFIVSSNPLSLGALTPPGKFGADIVIGDAQPFGIPTQFGGPHCGYFATTKAFMRKIPGRLVGQTVDSDGKRGFVLTLQAREQHIRRDKATSNICSNQALNALAASVAMTALGKQGVKEMARQNISKAQYAKRQFEAKGFTVTFAGPFFNEFVVDCKRPVKEVNDALLQKNIIGGYDLGRDYKEHENHMLVAVTELRTKDEIDTLVNEMGAIQ</sequence>
<evidence type="ECO:0000255" key="1">
    <source>
        <dbReference type="HAMAP-Rule" id="MF_00712"/>
    </source>
</evidence>
<name>GCSPA_BACC7</name>
<dbReference type="EC" id="1.4.4.2" evidence="1"/>
<dbReference type="EMBL" id="CP001177">
    <property type="protein sequence ID" value="ACJ77808.1"/>
    <property type="molecule type" value="Genomic_DNA"/>
</dbReference>
<dbReference type="SMR" id="B7HNZ0"/>
<dbReference type="KEGG" id="bcr:BCAH187_A4357"/>
<dbReference type="HOGENOM" id="CLU_004620_0_2_9"/>
<dbReference type="Proteomes" id="UP000002214">
    <property type="component" value="Chromosome"/>
</dbReference>
<dbReference type="GO" id="GO:0004375">
    <property type="term" value="F:glycine dehydrogenase (decarboxylating) activity"/>
    <property type="evidence" value="ECO:0007669"/>
    <property type="project" value="UniProtKB-EC"/>
</dbReference>
<dbReference type="GO" id="GO:0019464">
    <property type="term" value="P:glycine decarboxylation via glycine cleavage system"/>
    <property type="evidence" value="ECO:0007669"/>
    <property type="project" value="UniProtKB-UniRule"/>
</dbReference>
<dbReference type="GO" id="GO:0009116">
    <property type="term" value="P:nucleoside metabolic process"/>
    <property type="evidence" value="ECO:0007669"/>
    <property type="project" value="InterPro"/>
</dbReference>
<dbReference type="CDD" id="cd00613">
    <property type="entry name" value="GDC-P"/>
    <property type="match status" value="1"/>
</dbReference>
<dbReference type="FunFam" id="3.40.640.10:FF:000113">
    <property type="entry name" value="Probable glycine dehydrogenase (decarboxylating) subunit 1"/>
    <property type="match status" value="1"/>
</dbReference>
<dbReference type="Gene3D" id="3.90.1150.10">
    <property type="entry name" value="Aspartate Aminotransferase, domain 1"/>
    <property type="match status" value="1"/>
</dbReference>
<dbReference type="Gene3D" id="3.40.640.10">
    <property type="entry name" value="Type I PLP-dependent aspartate aminotransferase-like (Major domain)"/>
    <property type="match status" value="1"/>
</dbReference>
<dbReference type="HAMAP" id="MF_00712">
    <property type="entry name" value="GcvPA"/>
    <property type="match status" value="1"/>
</dbReference>
<dbReference type="InterPro" id="IPR023010">
    <property type="entry name" value="GcvPA"/>
</dbReference>
<dbReference type="InterPro" id="IPR049315">
    <property type="entry name" value="GDC-P_N"/>
</dbReference>
<dbReference type="InterPro" id="IPR020581">
    <property type="entry name" value="GDC_P"/>
</dbReference>
<dbReference type="InterPro" id="IPR015424">
    <property type="entry name" value="PyrdxlP-dep_Trfase"/>
</dbReference>
<dbReference type="InterPro" id="IPR015421">
    <property type="entry name" value="PyrdxlP-dep_Trfase_major"/>
</dbReference>
<dbReference type="InterPro" id="IPR015422">
    <property type="entry name" value="PyrdxlP-dep_Trfase_small"/>
</dbReference>
<dbReference type="NCBIfam" id="NF001696">
    <property type="entry name" value="PRK00451.1"/>
    <property type="match status" value="1"/>
</dbReference>
<dbReference type="PANTHER" id="PTHR42806">
    <property type="entry name" value="GLYCINE CLEAVAGE SYSTEM P-PROTEIN"/>
    <property type="match status" value="1"/>
</dbReference>
<dbReference type="PANTHER" id="PTHR42806:SF1">
    <property type="entry name" value="GLYCINE DEHYDROGENASE (DECARBOXYLATING)"/>
    <property type="match status" value="1"/>
</dbReference>
<dbReference type="Pfam" id="PF02347">
    <property type="entry name" value="GDC-P"/>
    <property type="match status" value="1"/>
</dbReference>
<dbReference type="PIRSF" id="PIRSF006815">
    <property type="entry name" value="GcvPA"/>
    <property type="match status" value="1"/>
</dbReference>
<dbReference type="SUPFAM" id="SSF53383">
    <property type="entry name" value="PLP-dependent transferases"/>
    <property type="match status" value="1"/>
</dbReference>
<gene>
    <name evidence="1" type="primary">gcvPA</name>
    <name type="ordered locus">BCAH187_A4357</name>
</gene>
<organism>
    <name type="scientific">Bacillus cereus (strain AH187)</name>
    <dbReference type="NCBI Taxonomy" id="405534"/>
    <lineage>
        <taxon>Bacteria</taxon>
        <taxon>Bacillati</taxon>
        <taxon>Bacillota</taxon>
        <taxon>Bacilli</taxon>
        <taxon>Bacillales</taxon>
        <taxon>Bacillaceae</taxon>
        <taxon>Bacillus</taxon>
        <taxon>Bacillus cereus group</taxon>
    </lineage>
</organism>
<proteinExistence type="inferred from homology"/>
<feature type="chain" id="PRO_1000132470" description="Probable glycine dehydrogenase (decarboxylating) subunit 1">
    <location>
        <begin position="1"/>
        <end position="447"/>
    </location>
</feature>
<keyword id="KW-0560">Oxidoreductase</keyword>
<accession>B7HNZ0</accession>
<protein>
    <recommendedName>
        <fullName evidence="1">Probable glycine dehydrogenase (decarboxylating) subunit 1</fullName>
        <ecNumber evidence="1">1.4.4.2</ecNumber>
    </recommendedName>
    <alternativeName>
        <fullName evidence="1">Glycine cleavage system P-protein subunit 1</fullName>
    </alternativeName>
    <alternativeName>
        <fullName evidence="1">Glycine decarboxylase subunit 1</fullName>
    </alternativeName>
    <alternativeName>
        <fullName evidence="1">Glycine dehydrogenase (aminomethyl-transferring) subunit 1</fullName>
    </alternativeName>
</protein>
<comment type="function">
    <text evidence="1">The glycine cleavage system catalyzes the degradation of glycine. The P protein binds the alpha-amino group of glycine through its pyridoxal phosphate cofactor; CO(2) is released and the remaining methylamine moiety is then transferred to the lipoamide cofactor of the H protein.</text>
</comment>
<comment type="catalytic activity">
    <reaction evidence="1">
        <text>N(6)-[(R)-lipoyl]-L-lysyl-[glycine-cleavage complex H protein] + glycine + H(+) = N(6)-[(R)-S(8)-aminomethyldihydrolipoyl]-L-lysyl-[glycine-cleavage complex H protein] + CO2</text>
        <dbReference type="Rhea" id="RHEA:24304"/>
        <dbReference type="Rhea" id="RHEA-COMP:10494"/>
        <dbReference type="Rhea" id="RHEA-COMP:10495"/>
        <dbReference type="ChEBI" id="CHEBI:15378"/>
        <dbReference type="ChEBI" id="CHEBI:16526"/>
        <dbReference type="ChEBI" id="CHEBI:57305"/>
        <dbReference type="ChEBI" id="CHEBI:83099"/>
        <dbReference type="ChEBI" id="CHEBI:83143"/>
        <dbReference type="EC" id="1.4.4.2"/>
    </reaction>
</comment>
<comment type="subunit">
    <text evidence="1">The glycine cleavage system is composed of four proteins: P, T, L and H. In this organism, the P 'protein' is a heterodimer of two subunits.</text>
</comment>
<comment type="similarity">
    <text evidence="1">Belongs to the GcvP family. N-terminal subunit subfamily.</text>
</comment>
<reference key="1">
    <citation type="submission" date="2008-10" db="EMBL/GenBank/DDBJ databases">
        <title>Genome sequence of Bacillus cereus AH187.</title>
        <authorList>
            <person name="Dodson R.J."/>
            <person name="Durkin A.S."/>
            <person name="Rosovitz M.J."/>
            <person name="Rasko D.A."/>
            <person name="Kolsto A.B."/>
            <person name="Okstad O.A."/>
            <person name="Ravel J."/>
            <person name="Sutton G."/>
        </authorList>
    </citation>
    <scope>NUCLEOTIDE SEQUENCE [LARGE SCALE GENOMIC DNA]</scope>
    <source>
        <strain>AH187</strain>
    </source>
</reference>